<organismHost>
    <name type="scientific">Aves</name>
    <dbReference type="NCBI Taxonomy" id="8782"/>
</organismHost>
<organismHost>
    <name type="scientific">Homo sapiens</name>
    <name type="common">Human</name>
    <dbReference type="NCBI Taxonomy" id="9606"/>
</organismHost>
<organismHost>
    <name type="scientific">Sus scrofa</name>
    <name type="common">Pig</name>
    <dbReference type="NCBI Taxonomy" id="9823"/>
</organismHost>
<protein>
    <recommendedName>
        <fullName evidence="1">Matrix protein 2</fullName>
    </recommendedName>
    <alternativeName>
        <fullName evidence="1">Proton channel protein M2</fullName>
    </alternativeName>
</protein>
<gene>
    <name evidence="1" type="primary">M</name>
    <name type="synonym">M2</name>
</gene>
<feature type="chain" id="PRO_0000372919" description="Matrix protein 2">
    <location>
        <begin position="1"/>
        <end position="97"/>
    </location>
</feature>
<feature type="topological domain" description="Virion surface" evidence="1">
    <location>
        <begin position="1"/>
        <end position="22"/>
    </location>
</feature>
<feature type="transmembrane region" description="Helical; Signal-anchor for type III membrane protein" evidence="1">
    <location>
        <begin position="23"/>
        <end position="43"/>
    </location>
</feature>
<feature type="topological domain" description="Intravirion" evidence="1">
    <location>
        <begin position="44"/>
        <end position="97"/>
    </location>
</feature>
<feature type="region of interest" description="Disordered" evidence="2">
    <location>
        <begin position="60"/>
        <end position="85"/>
    </location>
</feature>
<feature type="compositionally biased region" description="Basic and acidic residues" evidence="2">
    <location>
        <begin position="71"/>
        <end position="80"/>
    </location>
</feature>
<feature type="site" description="Essential for channel activity, possibly by being protonated during channel activation, and by forming the channel gate and the selective filter" evidence="1">
    <location>
        <position position="37"/>
    </location>
</feature>
<feature type="site" description="Seems to be involved in pH gating" evidence="1">
    <location>
        <position position="41"/>
    </location>
</feature>
<feature type="modified residue" description="Phosphoserine; by host" evidence="1">
    <location>
        <position position="64"/>
    </location>
</feature>
<feature type="modified residue" description="Phosphoserine; by host" evidence="1">
    <location>
        <position position="82"/>
    </location>
</feature>
<feature type="modified residue" description="Phosphoserine; by host" evidence="1">
    <location>
        <position position="93"/>
    </location>
</feature>
<feature type="lipid moiety-binding region" description="S-palmitoyl cysteine; by host" evidence="1">
    <location>
        <position position="50"/>
    </location>
</feature>
<feature type="glycosylation site" description="N-linked (GlcNAc...) asparagine; by host" evidence="1">
    <location>
        <position position="20"/>
    </location>
</feature>
<feature type="disulfide bond" description="Interchain (with C-17)" evidence="1">
    <location>
        <position position="17"/>
    </location>
</feature>
<feature type="disulfide bond" description="Interchain (with C-19)" evidence="1">
    <location>
        <position position="19"/>
    </location>
</feature>
<dbReference type="EMBL" id="CY020446">
    <property type="protein sequence ID" value="ABO38353.1"/>
    <property type="molecule type" value="Viral_cRNA"/>
</dbReference>
<dbReference type="SMR" id="A4GCI7"/>
<dbReference type="IntAct" id="A4GCI7">
    <property type="interactions" value="1"/>
</dbReference>
<dbReference type="GlyCosmos" id="A4GCI7">
    <property type="glycosylation" value="1 site, No reported glycans"/>
</dbReference>
<dbReference type="Proteomes" id="UP000008213">
    <property type="component" value="Genome"/>
</dbReference>
<dbReference type="GO" id="GO:0020002">
    <property type="term" value="C:host cell plasma membrane"/>
    <property type="evidence" value="ECO:0007669"/>
    <property type="project" value="UniProtKB-SubCell"/>
</dbReference>
<dbReference type="GO" id="GO:0016020">
    <property type="term" value="C:membrane"/>
    <property type="evidence" value="ECO:0007669"/>
    <property type="project" value="UniProtKB-UniRule"/>
</dbReference>
<dbReference type="GO" id="GO:0055036">
    <property type="term" value="C:virion membrane"/>
    <property type="evidence" value="ECO:0007669"/>
    <property type="project" value="UniProtKB-SubCell"/>
</dbReference>
<dbReference type="GO" id="GO:0005216">
    <property type="term" value="F:monoatomic ion channel activity"/>
    <property type="evidence" value="ECO:0007669"/>
    <property type="project" value="UniProtKB-UniRule"/>
</dbReference>
<dbReference type="GO" id="GO:0015078">
    <property type="term" value="F:proton transmembrane transporter activity"/>
    <property type="evidence" value="ECO:0007669"/>
    <property type="project" value="UniProtKB-UniRule"/>
</dbReference>
<dbReference type="GO" id="GO:0051259">
    <property type="term" value="P:protein complex oligomerization"/>
    <property type="evidence" value="ECO:0007669"/>
    <property type="project" value="UniProtKB-UniRule"/>
</dbReference>
<dbReference type="GO" id="GO:0044694">
    <property type="term" value="P:symbiont genome entry into host cell via pore formation in plasma membrane"/>
    <property type="evidence" value="ECO:0007669"/>
    <property type="project" value="UniProtKB-UniRule"/>
</dbReference>
<dbReference type="GO" id="GO:0140321">
    <property type="term" value="P:symbiont-mediated suppression of host autophagy"/>
    <property type="evidence" value="ECO:0007669"/>
    <property type="project" value="UniProtKB-KW"/>
</dbReference>
<dbReference type="Gene3D" id="6.10.250.1640">
    <property type="match status" value="1"/>
</dbReference>
<dbReference type="HAMAP" id="MF_04069">
    <property type="entry name" value="INFV_M2"/>
    <property type="match status" value="1"/>
</dbReference>
<dbReference type="InterPro" id="IPR002089">
    <property type="entry name" value="Flu_M2"/>
</dbReference>
<dbReference type="Pfam" id="PF00599">
    <property type="entry name" value="Flu_M2"/>
    <property type="match status" value="1"/>
</dbReference>
<reference key="1">
    <citation type="submission" date="2007-03" db="EMBL/GenBank/DDBJ databases">
        <title>The NIAID influenza genome sequencing project.</title>
        <authorList>
            <person name="Ghedin E."/>
            <person name="Spiro D."/>
            <person name="Miller N."/>
            <person name="Zaborsky J."/>
            <person name="Feldblyum T."/>
            <person name="Subbu V."/>
            <person name="Shumway M."/>
            <person name="Sparenborg J."/>
            <person name="Groveman L."/>
            <person name="Halpin R."/>
            <person name="Sitz J."/>
            <person name="Koo H."/>
            <person name="Salzberg S.L."/>
            <person name="Webster R.G."/>
            <person name="Hoffmann E."/>
            <person name="Krauss S."/>
            <person name="Naeve C."/>
            <person name="Bao Y."/>
            <person name="Bolotov P."/>
            <person name="Dernovoy D."/>
            <person name="Kiryutin B."/>
            <person name="Lipman D.J."/>
            <person name="Tatusova T."/>
        </authorList>
    </citation>
    <scope>NUCLEOTIDE SEQUENCE [GENOMIC RNA]</scope>
</reference>
<reference key="2">
    <citation type="submission" date="2007-03" db="EMBL/GenBank/DDBJ databases">
        <authorList>
            <consortium name="The NIAID Influenza Genome Sequencing Consortium"/>
        </authorList>
    </citation>
    <scope>NUCLEOTIDE SEQUENCE [GENOMIC RNA]</scope>
</reference>
<comment type="function">
    <text evidence="1">Forms a proton-selective ion channel that is necessary for the efficient release of the viral genome during virus entry. After attaching to the cell surface, the virion enters the cell by endocytosis. Acidification of the endosome triggers M2 ion channel activity. The influx of protons into virion interior is believed to disrupt interactions between the viral ribonucleoprotein (RNP), matrix protein 1 (M1), and lipid bilayers, thereby freeing the viral genome from interaction with viral proteins and enabling RNA segments to migrate to the host cell nucleus, where influenza virus RNA transcription and replication occur. Also plays a role in viral proteins secretory pathway. Elevates the intravesicular pH of normally acidic compartments, such as trans-Golgi network, preventing newly formed hemagglutinin from premature switching to the fusion-active conformation.</text>
</comment>
<comment type="activity regulation">
    <text>The M2 protein from most influenza A strains is inhibited by amantadine and rimantadine, resulting in viral uncoating incapacity. Emergence of amantadine-resistant variants is usually rapid.</text>
</comment>
<comment type="subunit">
    <text evidence="1">Homotetramer; composed of two disulfide-linked dimers held together by non-covalent interactions. May interact with matrix protein 1.</text>
</comment>
<comment type="subcellular location">
    <subcellularLocation>
        <location evidence="1">Virion membrane</location>
    </subcellularLocation>
    <subcellularLocation>
        <location evidence="1">Host apical cell membrane</location>
        <topology evidence="1">Single-pass type III membrane protein</topology>
    </subcellularLocation>
    <text evidence="1">Abundantly expressed at the apical plasma membrane in infected polarized epithelial cells, in close proximity to budding and assembled virions. Minor component of virions (only 16-20 molecules/virion).</text>
</comment>
<comment type="alternative products">
    <event type="alternative splicing"/>
    <isoform>
        <id>A4GCI7-1</id>
        <name>M2</name>
        <sequence type="displayed"/>
    </isoform>
    <isoform>
        <id>A4GCI8-1</id>
        <name>M1</name>
        <sequence type="external"/>
    </isoform>
    <text>Only the first 9 residues are shared by the 2 isoforms.</text>
</comment>
<comment type="domain">
    <text evidence="1">Cytoplasmic tail plays an important role in virion assembly and morphogenesis.</text>
</comment>
<comment type="miscellaneous">
    <text evidence="1">When the channel is activated, one or more imidazole moieties of His-37 probably become bi-protonated.</text>
</comment>
<comment type="similarity">
    <text evidence="1">Belongs to the influenza viruses matrix protein M2 family.</text>
</comment>
<keyword id="KW-0025">Alternative splicing</keyword>
<keyword id="KW-1015">Disulfide bond</keyword>
<keyword id="KW-0325">Glycoprotein</keyword>
<keyword id="KW-1032">Host cell membrane</keyword>
<keyword id="KW-1043">Host membrane</keyword>
<keyword id="KW-0945">Host-virus interaction</keyword>
<keyword id="KW-0375">Hydrogen ion transport</keyword>
<keyword id="KW-1083">Inhibition of host autophagy by virus</keyword>
<keyword id="KW-0407">Ion channel</keyword>
<keyword id="KW-0406">Ion transport</keyword>
<keyword id="KW-0449">Lipoprotein</keyword>
<keyword id="KW-0472">Membrane</keyword>
<keyword id="KW-0564">Palmitate</keyword>
<keyword id="KW-0597">Phosphoprotein</keyword>
<keyword id="KW-0735">Signal-anchor</keyword>
<keyword id="KW-0812">Transmembrane</keyword>
<keyword id="KW-1133">Transmembrane helix</keyword>
<keyword id="KW-0813">Transport</keyword>
<keyword id="KW-1182">Viral ion channel</keyword>
<keyword id="KW-0946">Virion</keyword>
<proteinExistence type="inferred from homology"/>
<name>M2_I36A0</name>
<organism>
    <name type="scientific">Influenza A virus (strain A/Henry/1936 H1N1)</name>
    <dbReference type="NCBI Taxonomy" id="425562"/>
    <lineage>
        <taxon>Viruses</taxon>
        <taxon>Riboviria</taxon>
        <taxon>Orthornavirae</taxon>
        <taxon>Negarnaviricota</taxon>
        <taxon>Polyploviricotina</taxon>
        <taxon>Insthoviricetes</taxon>
        <taxon>Articulavirales</taxon>
        <taxon>Orthomyxoviridae</taxon>
        <taxon>Alphainfluenzavirus</taxon>
        <taxon>Alphainfluenzavirus influenzae</taxon>
        <taxon>Influenza A virus</taxon>
    </lineage>
</organism>
<sequence length="97" mass="11131">MSLLTEVETPIRNEWGCRCNGSSDPLVIAANIIGILHLILWILDRLFFKCIYRLFEYGLKRGPSTEGVPESMREEYRKEQQSAVDADDGHFVSIELE</sequence>
<accession>A4GCI7</accession>
<evidence type="ECO:0000255" key="1">
    <source>
        <dbReference type="HAMAP-Rule" id="MF_04069"/>
    </source>
</evidence>
<evidence type="ECO:0000256" key="2">
    <source>
        <dbReference type="SAM" id="MobiDB-lite"/>
    </source>
</evidence>